<accession>Q9BPJ5</accession>
<organism>
    <name type="scientific">Conus textile</name>
    <name type="common">Cloth-of-gold cone</name>
    <dbReference type="NCBI Taxonomy" id="6494"/>
    <lineage>
        <taxon>Eukaryota</taxon>
        <taxon>Metazoa</taxon>
        <taxon>Spiralia</taxon>
        <taxon>Lophotrochozoa</taxon>
        <taxon>Mollusca</taxon>
        <taxon>Gastropoda</taxon>
        <taxon>Caenogastropoda</taxon>
        <taxon>Neogastropoda</taxon>
        <taxon>Conoidea</taxon>
        <taxon>Conidae</taxon>
        <taxon>Conus</taxon>
        <taxon>Cylinder</taxon>
    </lineage>
</organism>
<name>M234_CONTE</name>
<protein>
    <recommendedName>
        <fullName>Conotoxin TxMMSK-04</fullName>
    </recommendedName>
</protein>
<sequence length="72" mass="7820">MMSKLGVLLTICLLLFPLTAVPLDGDQPADRPAERMQDGISSEHHPFFDSVKKKQQCCPPVACNMGCEPCCG</sequence>
<evidence type="ECO:0000250" key="1"/>
<evidence type="ECO:0000250" key="2">
    <source>
        <dbReference type="UniProtKB" id="P0CI24"/>
    </source>
</evidence>
<evidence type="ECO:0000255" key="3"/>
<evidence type="ECO:0000305" key="4"/>
<keyword id="KW-0027">Amidation</keyword>
<keyword id="KW-0165">Cleavage on pair of basic residues</keyword>
<keyword id="KW-1015">Disulfide bond</keyword>
<keyword id="KW-0379">Hydroxylation</keyword>
<keyword id="KW-0528">Neurotoxin</keyword>
<keyword id="KW-0873">Pyrrolidone carboxylic acid</keyword>
<keyword id="KW-0964">Secreted</keyword>
<keyword id="KW-0732">Signal</keyword>
<keyword id="KW-0800">Toxin</keyword>
<feature type="signal peptide" evidence="3">
    <location>
        <begin position="1"/>
        <end position="20"/>
    </location>
</feature>
<feature type="propeptide" id="PRO_0000404902" evidence="1">
    <location>
        <begin position="21"/>
        <end position="51"/>
    </location>
</feature>
<feature type="peptide" id="PRO_0000404903" description="Conotoxin TxMMSK-04">
    <location>
        <begin position="55"/>
        <end position="71"/>
    </location>
</feature>
<feature type="modified residue" description="Pyrrolidone carboxylic acid" evidence="1">
    <location>
        <position position="55"/>
    </location>
</feature>
<feature type="modified residue" description="4-hydroxyproline" evidence="1">
    <location>
        <position position="69"/>
    </location>
</feature>
<feature type="modified residue" description="Cysteine amide" evidence="1">
    <location>
        <position position="71"/>
    </location>
</feature>
<feature type="disulfide bond" evidence="2">
    <location>
        <begin position="57"/>
        <end position="71"/>
    </location>
</feature>
<feature type="disulfide bond" evidence="2">
    <location>
        <begin position="58"/>
        <end position="67"/>
    </location>
</feature>
<feature type="disulfide bond" evidence="2">
    <location>
        <begin position="63"/>
        <end position="70"/>
    </location>
</feature>
<comment type="subcellular location">
    <subcellularLocation>
        <location evidence="1">Secreted</location>
    </subcellularLocation>
</comment>
<comment type="tissue specificity">
    <text>Expressed by the venom duct.</text>
</comment>
<comment type="domain">
    <text>The cysteine framework is III (CC-C-C-CC). Classified in the M-2 branch, since 2 residues stand between the fourth and the fifth cysteine residues.</text>
</comment>
<comment type="similarity">
    <text evidence="4">Belongs to the conotoxin M superfamily.</text>
</comment>
<reference key="1">
    <citation type="journal article" date="2001" name="Mol. Biol. Evol.">
        <title>Mechanisms for evolving hypervariability: the case of conopeptides.</title>
        <authorList>
            <person name="Conticello S.G."/>
            <person name="Gilad Y."/>
            <person name="Avidan N."/>
            <person name="Ben-Asher E."/>
            <person name="Levy Z."/>
            <person name="Fainzilber M."/>
        </authorList>
    </citation>
    <scope>NUCLEOTIDE SEQUENCE [MRNA]</scope>
    <source>
        <tissue>Venom duct</tissue>
    </source>
</reference>
<dbReference type="EMBL" id="AF214928">
    <property type="protein sequence ID" value="AAG60356.1"/>
    <property type="molecule type" value="mRNA"/>
</dbReference>
<dbReference type="ConoServer" id="615">
    <property type="toxin name" value="TxMMSK-04 precursor"/>
</dbReference>
<dbReference type="GO" id="GO:0005576">
    <property type="term" value="C:extracellular region"/>
    <property type="evidence" value="ECO:0007669"/>
    <property type="project" value="UniProtKB-SubCell"/>
</dbReference>
<dbReference type="GO" id="GO:0008200">
    <property type="term" value="F:ion channel inhibitor activity"/>
    <property type="evidence" value="ECO:0007669"/>
    <property type="project" value="InterPro"/>
</dbReference>
<dbReference type="GO" id="GO:0090729">
    <property type="term" value="F:toxin activity"/>
    <property type="evidence" value="ECO:0007669"/>
    <property type="project" value="UniProtKB-KW"/>
</dbReference>
<dbReference type="InterPro" id="IPR004214">
    <property type="entry name" value="Conotoxin"/>
</dbReference>
<dbReference type="Pfam" id="PF02950">
    <property type="entry name" value="Conotoxin"/>
    <property type="match status" value="1"/>
</dbReference>
<proteinExistence type="evidence at transcript level"/>